<reference key="1">
    <citation type="journal article" date="1999" name="Plasmid">
        <title>Characterization of cryptic plasmids pDP1 and pSMB1 of Streptococcus pneumoniae.</title>
        <authorList>
            <person name="Oggioni M.R."/>
            <person name="Iannelli F."/>
            <person name="Pozzi G."/>
        </authorList>
    </citation>
    <scope>NUCLEOTIDE SEQUENCE [LARGE SCALE GENOMIC DNA]</scope>
    <source>
        <strain>D39 / NCTC 7466</strain>
        <plasmid>pDP1</plasmid>
    </source>
</reference>
<accession>O54519</accession>
<sequence>MNKKFLKCGTLFLISCSILGSTIPAVTVFSDEVTITYNSENNSEKNELYNQLSAEKKGQFDELVSNLNLSEQEQLDLLQQYKEEHPRRAKRGIKSAIIKKVARFLAAKVGQKSVVEITDYLFEWQDNLEAGAENYLVQYGWDRNIAHWTIKTVSFIFL</sequence>
<keyword id="KW-0614">Plasmid</keyword>
<keyword id="KW-1185">Reference proteome</keyword>
<keyword id="KW-0732">Signal</keyword>
<evidence type="ECO:0000255" key="1"/>
<dbReference type="EMBL" id="AF047696">
    <property type="protein sequence ID" value="AAD12157.1"/>
    <property type="molecule type" value="Genomic_DNA"/>
</dbReference>
<dbReference type="RefSeq" id="NP_863588.1">
    <property type="nucleotide sequence ID" value="NC_005022.1"/>
</dbReference>
<dbReference type="RefSeq" id="WP_001860752.1">
    <property type="nucleotide sequence ID" value="NZ_JAMLJR010000030.1"/>
</dbReference>
<dbReference type="PRO" id="PR:O54519"/>
<dbReference type="Proteomes" id="UP000001452">
    <property type="component" value="Plasmid pDP1"/>
</dbReference>
<geneLocation type="plasmid">
    <name>pDP1</name>
</geneLocation>
<gene>
    <name type="primary">orf3</name>
    <name type="ordered locus">SPD_2303</name>
</gene>
<proteinExistence type="inferred from homology"/>
<protein>
    <recommendedName>
        <fullName>Uncharacterized protein SPD_2303</fullName>
    </recommendedName>
</protein>
<feature type="signal peptide" evidence="1">
    <location>
        <begin position="1"/>
        <end position="30"/>
    </location>
</feature>
<feature type="chain" id="PRO_0000275933" description="Uncharacterized protein SPD_2303">
    <location>
        <begin position="31"/>
        <end position="158"/>
    </location>
</feature>
<organism>
    <name type="scientific">Streptococcus pneumoniae serotype 2 (strain D39 / NCTC 7466)</name>
    <dbReference type="NCBI Taxonomy" id="373153"/>
    <lineage>
        <taxon>Bacteria</taxon>
        <taxon>Bacillati</taxon>
        <taxon>Bacillota</taxon>
        <taxon>Bacilli</taxon>
        <taxon>Lactobacillales</taxon>
        <taxon>Streptococcaceae</taxon>
        <taxon>Streptococcus</taxon>
    </lineage>
</organism>
<name>Y2303_STRP2</name>